<name>GRAS_STAAN</name>
<organism>
    <name type="scientific">Staphylococcus aureus (strain N315)</name>
    <dbReference type="NCBI Taxonomy" id="158879"/>
    <lineage>
        <taxon>Bacteria</taxon>
        <taxon>Bacillati</taxon>
        <taxon>Bacillota</taxon>
        <taxon>Bacilli</taxon>
        <taxon>Bacillales</taxon>
        <taxon>Staphylococcaceae</taxon>
        <taxon>Staphylococcus</taxon>
    </lineage>
</organism>
<feature type="chain" id="PRO_0000347922" description="Sensor protein kinase GraS">
    <location>
        <begin position="1"/>
        <end position="346"/>
    </location>
</feature>
<feature type="transmembrane region" description="Helical" evidence="2">
    <location>
        <begin position="15"/>
        <end position="35"/>
    </location>
</feature>
<feature type="transmembrane region" description="Helical" evidence="2">
    <location>
        <begin position="43"/>
        <end position="63"/>
    </location>
</feature>
<feature type="domain" description="Histidine kinase" evidence="3">
    <location>
        <begin position="126"/>
        <end position="332"/>
    </location>
</feature>
<keyword id="KW-0046">Antibiotic resistance</keyword>
<keyword id="KW-0067">ATP-binding</keyword>
<keyword id="KW-1003">Cell membrane</keyword>
<keyword id="KW-0418">Kinase</keyword>
<keyword id="KW-0472">Membrane</keyword>
<keyword id="KW-0547">Nucleotide-binding</keyword>
<keyword id="KW-0808">Transferase</keyword>
<keyword id="KW-0812">Transmembrane</keyword>
<keyword id="KW-1133">Transmembrane helix</keyword>
<keyword id="KW-0902">Two-component regulatory system</keyword>
<keyword id="KW-0843">Virulence</keyword>
<evidence type="ECO:0000250" key="1">
    <source>
        <dbReference type="UniProtKB" id="Q2G0D9"/>
    </source>
</evidence>
<evidence type="ECO:0000255" key="2"/>
<evidence type="ECO:0000255" key="3">
    <source>
        <dbReference type="PROSITE-ProRule" id="PRU00107"/>
    </source>
</evidence>
<evidence type="ECO:0000305" key="4"/>
<reference key="1">
    <citation type="journal article" date="2005" name="Antimicrob. Agents Chemother.">
        <title>DNA microarray-based identification of genes associated with glycopeptide resistance in Staphylococcus aureus.</title>
        <authorList>
            <person name="Cui L."/>
            <person name="Lian J.-Q."/>
            <person name="Neoh H.-M."/>
            <person name="Reyes E."/>
            <person name="Hiramatsu K."/>
        </authorList>
    </citation>
    <scope>NUCLEOTIDE SEQUENCE [GENOMIC DNA]</scope>
</reference>
<reference key="2">
    <citation type="journal article" date="2001" name="Lancet">
        <title>Whole genome sequencing of meticillin-resistant Staphylococcus aureus.</title>
        <authorList>
            <person name="Kuroda M."/>
            <person name="Ohta T."/>
            <person name="Uchiyama I."/>
            <person name="Baba T."/>
            <person name="Yuzawa H."/>
            <person name="Kobayashi I."/>
            <person name="Cui L."/>
            <person name="Oguchi A."/>
            <person name="Aoki K."/>
            <person name="Nagai Y."/>
            <person name="Lian J.-Q."/>
            <person name="Ito T."/>
            <person name="Kanamori M."/>
            <person name="Matsumaru H."/>
            <person name="Maruyama A."/>
            <person name="Murakami H."/>
            <person name="Hosoyama A."/>
            <person name="Mizutani-Ui Y."/>
            <person name="Takahashi N.K."/>
            <person name="Sawano T."/>
            <person name="Inoue R."/>
            <person name="Kaito C."/>
            <person name="Sekimizu K."/>
            <person name="Hirakawa H."/>
            <person name="Kuhara S."/>
            <person name="Goto S."/>
            <person name="Yabuzaki J."/>
            <person name="Kanehisa M."/>
            <person name="Yamashita A."/>
            <person name="Oshima K."/>
            <person name="Furuya K."/>
            <person name="Yoshino C."/>
            <person name="Shiba T."/>
            <person name="Hattori M."/>
            <person name="Ogasawara N."/>
            <person name="Hayashi H."/>
            <person name="Hiramatsu K."/>
        </authorList>
    </citation>
    <scope>NUCLEOTIDE SEQUENCE [LARGE SCALE GENOMIC DNA]</scope>
    <source>
        <strain>N315</strain>
    </source>
</reference>
<reference key="3">
    <citation type="submission" date="2007-10" db="UniProtKB">
        <title>Shotgun proteomic analysis of total and membrane protein extracts of S. aureus strain N315.</title>
        <authorList>
            <person name="Vaezzadeh A.R."/>
            <person name="Deshusses J."/>
            <person name="Lescuyer P."/>
            <person name="Hochstrasser D.F."/>
        </authorList>
    </citation>
    <scope>IDENTIFICATION BY MASS SPECTROMETRY [LARGE SCALE ANALYSIS]</scope>
    <source>
        <strain>N315</strain>
    </source>
</reference>
<comment type="function">
    <text evidence="1">Member of the two-component regulatory system GraR/GraS involved in resistance against cationic antimicrobial peptides (CAMPs). Functions as a sensor protein kinase which phosphorylates GraR through the auxiliary protein GraX. In turn, GraR up-regulates many genes such as adhesins, exoproteins, transporters, toxins, and proteins involved in cell wall synthesis. Down-regulates the expression of many genes involved in RNA and amino acid synthesis or glycolysis.</text>
</comment>
<comment type="catalytic activity">
    <reaction>
        <text>ATP + protein L-histidine = ADP + protein N-phospho-L-histidine.</text>
        <dbReference type="EC" id="2.7.13.3"/>
    </reaction>
</comment>
<comment type="subunit">
    <text evidence="1">Interacts with GraX.</text>
</comment>
<comment type="subcellular location">
    <subcellularLocation>
        <location evidence="4">Cell membrane</location>
        <topology evidence="4">Multi-pass membrane protein</topology>
    </subcellularLocation>
</comment>
<protein>
    <recommendedName>
        <fullName>Sensor protein kinase GraS</fullName>
        <ecNumber>2.7.13.3</ecNumber>
    </recommendedName>
    <alternativeName>
        <fullName>Glycopeptide resistance-associated protein S</fullName>
    </alternativeName>
</protein>
<gene>
    <name type="primary">graS</name>
    <name type="ordered locus">SA0615</name>
</gene>
<dbReference type="EC" id="2.7.13.3"/>
<dbReference type="EMBL" id="AB240056">
    <property type="protein sequence ID" value="BAE47969.1"/>
    <property type="molecule type" value="Genomic_DNA"/>
</dbReference>
<dbReference type="EMBL" id="BA000018">
    <property type="protein sequence ID" value="BAB41848.1"/>
    <property type="molecule type" value="Genomic_DNA"/>
</dbReference>
<dbReference type="PIR" id="E89836">
    <property type="entry name" value="E89836"/>
</dbReference>
<dbReference type="RefSeq" id="WP_001061264.1">
    <property type="nucleotide sequence ID" value="NC_002745.2"/>
</dbReference>
<dbReference type="SMR" id="Q7A6Z3"/>
<dbReference type="EnsemblBacteria" id="BAB41848">
    <property type="protein sequence ID" value="BAB41848"/>
    <property type="gene ID" value="BAB41848"/>
</dbReference>
<dbReference type="KEGG" id="sau:SA0615"/>
<dbReference type="HOGENOM" id="CLU_000445_13_1_9"/>
<dbReference type="GO" id="GO:0005886">
    <property type="term" value="C:plasma membrane"/>
    <property type="evidence" value="ECO:0007669"/>
    <property type="project" value="UniProtKB-SubCell"/>
</dbReference>
<dbReference type="GO" id="GO:0005524">
    <property type="term" value="F:ATP binding"/>
    <property type="evidence" value="ECO:0007669"/>
    <property type="project" value="UniProtKB-KW"/>
</dbReference>
<dbReference type="GO" id="GO:0004721">
    <property type="term" value="F:phosphoprotein phosphatase activity"/>
    <property type="evidence" value="ECO:0007669"/>
    <property type="project" value="TreeGrafter"/>
</dbReference>
<dbReference type="GO" id="GO:0000155">
    <property type="term" value="F:phosphorelay sensor kinase activity"/>
    <property type="evidence" value="ECO:0007669"/>
    <property type="project" value="InterPro"/>
</dbReference>
<dbReference type="GO" id="GO:0016036">
    <property type="term" value="P:cellular response to phosphate starvation"/>
    <property type="evidence" value="ECO:0007669"/>
    <property type="project" value="TreeGrafter"/>
</dbReference>
<dbReference type="GO" id="GO:0046677">
    <property type="term" value="P:response to antibiotic"/>
    <property type="evidence" value="ECO:0007669"/>
    <property type="project" value="UniProtKB-KW"/>
</dbReference>
<dbReference type="Gene3D" id="3.30.565.10">
    <property type="entry name" value="Histidine kinase-like ATPase, C-terminal domain"/>
    <property type="match status" value="1"/>
</dbReference>
<dbReference type="InterPro" id="IPR050351">
    <property type="entry name" value="2-comp_sensor_kinase"/>
</dbReference>
<dbReference type="InterPro" id="IPR036890">
    <property type="entry name" value="HATPase_C_sf"/>
</dbReference>
<dbReference type="InterPro" id="IPR005467">
    <property type="entry name" value="His_kinase_dom"/>
</dbReference>
<dbReference type="InterPro" id="IPR036097">
    <property type="entry name" value="HisK_dim/P_sf"/>
</dbReference>
<dbReference type="InterPro" id="IPR004358">
    <property type="entry name" value="Sig_transdc_His_kin-like_C"/>
</dbReference>
<dbReference type="PANTHER" id="PTHR45453:SF2">
    <property type="entry name" value="HISTIDINE KINASE"/>
    <property type="match status" value="1"/>
</dbReference>
<dbReference type="PANTHER" id="PTHR45453">
    <property type="entry name" value="PHOSPHATE REGULON SENSOR PROTEIN PHOR"/>
    <property type="match status" value="1"/>
</dbReference>
<dbReference type="Pfam" id="PF02518">
    <property type="entry name" value="HATPase_c"/>
    <property type="match status" value="1"/>
</dbReference>
<dbReference type="PRINTS" id="PR00344">
    <property type="entry name" value="BCTRLSENSOR"/>
</dbReference>
<dbReference type="SMART" id="SM00387">
    <property type="entry name" value="HATPase_c"/>
    <property type="match status" value="1"/>
</dbReference>
<dbReference type="SUPFAM" id="SSF55874">
    <property type="entry name" value="ATPase domain of HSP90 chaperone/DNA topoisomerase II/histidine kinase"/>
    <property type="match status" value="1"/>
</dbReference>
<dbReference type="SUPFAM" id="SSF47384">
    <property type="entry name" value="Homodimeric domain of signal transducing histidine kinase"/>
    <property type="match status" value="1"/>
</dbReference>
<dbReference type="PROSITE" id="PS50109">
    <property type="entry name" value="HIS_KIN"/>
    <property type="match status" value="1"/>
</dbReference>
<sequence length="346" mass="41032">MNNLKWVAYFLKSRMNWIFWILFLNLLMLGISLIDYDFPIDSLFYIVSLNLSLTMIFLILTYFKEVKLYKHFDKDKEIEEIKHKDLAETPFQRHTVDYLYRQISAHKEKVVEQQLQLNMHEQTITEFVHDIKTPVTAMKLLIDQEKNQERKQALLYEWSRINSMLDTQLYITRLESQRKDMYFDYVSLKRMVIDEIQLTRHISQVKGIGFDVDFKVDDYVYTDTKWCRMIIRQILSNALKYSENFNIEIGTELNDQHVSLYIKDYGRGISKKDMPRIFERGFTSTANRNETTSSGMGLYLVNSVKDQLGIHLQVTSTVGKGTTVRLIFPLQNEIVERMSEVTNLSF</sequence>
<accession>Q7A6Z3</accession>
<accession>Q33C66</accession>
<proteinExistence type="evidence at protein level"/>